<protein>
    <recommendedName>
        <fullName evidence="1">Imidazolonepropionase</fullName>
        <ecNumber evidence="1">3.5.2.7</ecNumber>
    </recommendedName>
    <alternativeName>
        <fullName evidence="1">Imidazolone-5-propionate hydrolase</fullName>
    </alternativeName>
</protein>
<evidence type="ECO:0000255" key="1">
    <source>
        <dbReference type="HAMAP-Rule" id="MF_00372"/>
    </source>
</evidence>
<comment type="function">
    <text evidence="1">Catalyzes the hydrolytic cleavage of the carbon-nitrogen bond in imidazolone-5-propanoate to yield N-formimidoyl-L-glutamate. It is the third step in the universal histidine degradation pathway.</text>
</comment>
<comment type="catalytic activity">
    <reaction evidence="1">
        <text>4-imidazolone-5-propanoate + H2O = N-formimidoyl-L-glutamate</text>
        <dbReference type="Rhea" id="RHEA:23660"/>
        <dbReference type="ChEBI" id="CHEBI:15377"/>
        <dbReference type="ChEBI" id="CHEBI:58928"/>
        <dbReference type="ChEBI" id="CHEBI:77893"/>
        <dbReference type="EC" id="3.5.2.7"/>
    </reaction>
</comment>
<comment type="cofactor">
    <cofactor evidence="1">
        <name>Zn(2+)</name>
        <dbReference type="ChEBI" id="CHEBI:29105"/>
    </cofactor>
    <cofactor evidence="1">
        <name>Fe(3+)</name>
        <dbReference type="ChEBI" id="CHEBI:29034"/>
    </cofactor>
    <text evidence="1">Binds 1 zinc or iron ion per subunit.</text>
</comment>
<comment type="pathway">
    <text evidence="1">Amino-acid degradation; L-histidine degradation into L-glutamate; N-formimidoyl-L-glutamate from L-histidine: step 3/3.</text>
</comment>
<comment type="subcellular location">
    <subcellularLocation>
        <location evidence="1">Cytoplasm</location>
    </subcellularLocation>
</comment>
<comment type="similarity">
    <text evidence="1">Belongs to the metallo-dependent hydrolases superfamily. HutI family.</text>
</comment>
<name>HUTI_RUBXD</name>
<keyword id="KW-0963">Cytoplasm</keyword>
<keyword id="KW-0369">Histidine metabolism</keyword>
<keyword id="KW-0378">Hydrolase</keyword>
<keyword id="KW-0408">Iron</keyword>
<keyword id="KW-0479">Metal-binding</keyword>
<keyword id="KW-1185">Reference proteome</keyword>
<keyword id="KW-0862">Zinc</keyword>
<accession>Q1AYH1</accession>
<sequence>MSGTTLLIHDLEAAVSPKGSGPLRGRDLGELEVCSPASIAVSGDRIAAVGPPGEVLRDHPPGPGCETVDGRGKAALPGLVDCHTHAAFLGDRADEFELRCRGAGYEEIHASGGGILSTVRATRAGSEEELRAATERHLDWLLRHGTTTAEVKSGYGLDREAELRLLRAIRAAGDAHPVDVRPTFLGAHTVPPEFSGAAEYVEFVVAEVLPEAAPLAEAADVFVERGSFEVPEARRYLEACAGYGLALRLHADQFSERGAVPLAVELGARSADHLESTGGEGVRALGQSATAAVLLPACALFLGLPDPPARALLEAGAIVALATDFNPGSSFCSSLPVVLNLACTRLGLSPAEALCAATANAAYVLGLEGEVGRLSAGYRADILLLDAPDWRYIAYHLGGDHLAAVVKSGGLLPPG</sequence>
<dbReference type="EC" id="3.5.2.7" evidence="1"/>
<dbReference type="EMBL" id="CP000386">
    <property type="protein sequence ID" value="ABG03557.1"/>
    <property type="molecule type" value="Genomic_DNA"/>
</dbReference>
<dbReference type="RefSeq" id="WP_011563575.1">
    <property type="nucleotide sequence ID" value="NC_008148.1"/>
</dbReference>
<dbReference type="SMR" id="Q1AYH1"/>
<dbReference type="STRING" id="266117.Rxyl_0585"/>
<dbReference type="KEGG" id="rxy:Rxyl_0585"/>
<dbReference type="eggNOG" id="COG1228">
    <property type="taxonomic scope" value="Bacteria"/>
</dbReference>
<dbReference type="HOGENOM" id="CLU_041647_0_1_11"/>
<dbReference type="PhylomeDB" id="Q1AYH1"/>
<dbReference type="UniPathway" id="UPA00379">
    <property type="reaction ID" value="UER00551"/>
</dbReference>
<dbReference type="Proteomes" id="UP000006637">
    <property type="component" value="Chromosome"/>
</dbReference>
<dbReference type="GO" id="GO:0005737">
    <property type="term" value="C:cytoplasm"/>
    <property type="evidence" value="ECO:0007669"/>
    <property type="project" value="UniProtKB-SubCell"/>
</dbReference>
<dbReference type="GO" id="GO:0050480">
    <property type="term" value="F:imidazolonepropionase activity"/>
    <property type="evidence" value="ECO:0007669"/>
    <property type="project" value="UniProtKB-UniRule"/>
</dbReference>
<dbReference type="GO" id="GO:0005506">
    <property type="term" value="F:iron ion binding"/>
    <property type="evidence" value="ECO:0007669"/>
    <property type="project" value="UniProtKB-UniRule"/>
</dbReference>
<dbReference type="GO" id="GO:0008270">
    <property type="term" value="F:zinc ion binding"/>
    <property type="evidence" value="ECO:0007669"/>
    <property type="project" value="UniProtKB-UniRule"/>
</dbReference>
<dbReference type="GO" id="GO:0019556">
    <property type="term" value="P:L-histidine catabolic process to glutamate and formamide"/>
    <property type="evidence" value="ECO:0007669"/>
    <property type="project" value="UniProtKB-UniPathway"/>
</dbReference>
<dbReference type="GO" id="GO:0019557">
    <property type="term" value="P:L-histidine catabolic process to glutamate and formate"/>
    <property type="evidence" value="ECO:0007669"/>
    <property type="project" value="UniProtKB-UniPathway"/>
</dbReference>
<dbReference type="FunFam" id="3.20.20.140:FF:000007">
    <property type="entry name" value="Imidazolonepropionase"/>
    <property type="match status" value="1"/>
</dbReference>
<dbReference type="Gene3D" id="3.20.20.140">
    <property type="entry name" value="Metal-dependent hydrolases"/>
    <property type="match status" value="1"/>
</dbReference>
<dbReference type="Gene3D" id="2.30.40.10">
    <property type="entry name" value="Urease, subunit C, domain 1"/>
    <property type="match status" value="1"/>
</dbReference>
<dbReference type="HAMAP" id="MF_00372">
    <property type="entry name" value="HutI"/>
    <property type="match status" value="1"/>
</dbReference>
<dbReference type="InterPro" id="IPR006680">
    <property type="entry name" value="Amidohydro-rel"/>
</dbReference>
<dbReference type="InterPro" id="IPR005920">
    <property type="entry name" value="HutI"/>
</dbReference>
<dbReference type="InterPro" id="IPR011059">
    <property type="entry name" value="Metal-dep_hydrolase_composite"/>
</dbReference>
<dbReference type="InterPro" id="IPR032466">
    <property type="entry name" value="Metal_Hydrolase"/>
</dbReference>
<dbReference type="NCBIfam" id="TIGR01224">
    <property type="entry name" value="hutI"/>
    <property type="match status" value="1"/>
</dbReference>
<dbReference type="PANTHER" id="PTHR42752">
    <property type="entry name" value="IMIDAZOLONEPROPIONASE"/>
    <property type="match status" value="1"/>
</dbReference>
<dbReference type="PANTHER" id="PTHR42752:SF1">
    <property type="entry name" value="IMIDAZOLONEPROPIONASE-RELATED"/>
    <property type="match status" value="1"/>
</dbReference>
<dbReference type="Pfam" id="PF01979">
    <property type="entry name" value="Amidohydro_1"/>
    <property type="match status" value="1"/>
</dbReference>
<dbReference type="SUPFAM" id="SSF51338">
    <property type="entry name" value="Composite domain of metallo-dependent hydrolases"/>
    <property type="match status" value="1"/>
</dbReference>
<dbReference type="SUPFAM" id="SSF51556">
    <property type="entry name" value="Metallo-dependent hydrolases"/>
    <property type="match status" value="1"/>
</dbReference>
<feature type="chain" id="PRO_0000306502" description="Imidazolonepropionase">
    <location>
        <begin position="1"/>
        <end position="415"/>
    </location>
</feature>
<feature type="binding site" evidence="1">
    <location>
        <position position="83"/>
    </location>
    <ligand>
        <name>Fe(3+)</name>
        <dbReference type="ChEBI" id="CHEBI:29034"/>
    </ligand>
</feature>
<feature type="binding site" evidence="1">
    <location>
        <position position="83"/>
    </location>
    <ligand>
        <name>Zn(2+)</name>
        <dbReference type="ChEBI" id="CHEBI:29105"/>
    </ligand>
</feature>
<feature type="binding site" evidence="1">
    <location>
        <position position="85"/>
    </location>
    <ligand>
        <name>Fe(3+)</name>
        <dbReference type="ChEBI" id="CHEBI:29034"/>
    </ligand>
</feature>
<feature type="binding site" evidence="1">
    <location>
        <position position="85"/>
    </location>
    <ligand>
        <name>Zn(2+)</name>
        <dbReference type="ChEBI" id="CHEBI:29105"/>
    </ligand>
</feature>
<feature type="binding site" evidence="1">
    <location>
        <position position="92"/>
    </location>
    <ligand>
        <name>4-imidazolone-5-propanoate</name>
        <dbReference type="ChEBI" id="CHEBI:77893"/>
    </ligand>
</feature>
<feature type="binding site" evidence="1">
    <location>
        <position position="155"/>
    </location>
    <ligand>
        <name>4-imidazolone-5-propanoate</name>
        <dbReference type="ChEBI" id="CHEBI:77893"/>
    </ligand>
</feature>
<feature type="binding site" evidence="1">
    <location>
        <position position="155"/>
    </location>
    <ligand>
        <name>N-formimidoyl-L-glutamate</name>
        <dbReference type="ChEBI" id="CHEBI:58928"/>
    </ligand>
</feature>
<feature type="binding site" evidence="1">
    <location>
        <position position="188"/>
    </location>
    <ligand>
        <name>4-imidazolone-5-propanoate</name>
        <dbReference type="ChEBI" id="CHEBI:77893"/>
    </ligand>
</feature>
<feature type="binding site" evidence="1">
    <location>
        <position position="250"/>
    </location>
    <ligand>
        <name>Fe(3+)</name>
        <dbReference type="ChEBI" id="CHEBI:29034"/>
    </ligand>
</feature>
<feature type="binding site" evidence="1">
    <location>
        <position position="250"/>
    </location>
    <ligand>
        <name>Zn(2+)</name>
        <dbReference type="ChEBI" id="CHEBI:29105"/>
    </ligand>
</feature>
<feature type="binding site" evidence="1">
    <location>
        <position position="253"/>
    </location>
    <ligand>
        <name>4-imidazolone-5-propanoate</name>
        <dbReference type="ChEBI" id="CHEBI:77893"/>
    </ligand>
</feature>
<feature type="binding site" evidence="1">
    <location>
        <position position="324"/>
    </location>
    <ligand>
        <name>Fe(3+)</name>
        <dbReference type="ChEBI" id="CHEBI:29034"/>
    </ligand>
</feature>
<feature type="binding site" evidence="1">
    <location>
        <position position="324"/>
    </location>
    <ligand>
        <name>Zn(2+)</name>
        <dbReference type="ChEBI" id="CHEBI:29105"/>
    </ligand>
</feature>
<feature type="binding site" evidence="1">
    <location>
        <position position="326"/>
    </location>
    <ligand>
        <name>N-formimidoyl-L-glutamate</name>
        <dbReference type="ChEBI" id="CHEBI:58928"/>
    </ligand>
</feature>
<feature type="binding site" evidence="1">
    <location>
        <position position="328"/>
    </location>
    <ligand>
        <name>N-formimidoyl-L-glutamate</name>
        <dbReference type="ChEBI" id="CHEBI:58928"/>
    </ligand>
</feature>
<feature type="binding site" evidence="1">
    <location>
        <position position="329"/>
    </location>
    <ligand>
        <name>4-imidazolone-5-propanoate</name>
        <dbReference type="ChEBI" id="CHEBI:77893"/>
    </ligand>
</feature>
<gene>
    <name evidence="1" type="primary">hutI</name>
    <name type="ordered locus">Rxyl_0585</name>
</gene>
<organism>
    <name type="scientific">Rubrobacter xylanophilus (strain DSM 9941 / JCM 11954 / NBRC 16129 / PRD-1)</name>
    <dbReference type="NCBI Taxonomy" id="266117"/>
    <lineage>
        <taxon>Bacteria</taxon>
        <taxon>Bacillati</taxon>
        <taxon>Actinomycetota</taxon>
        <taxon>Rubrobacteria</taxon>
        <taxon>Rubrobacterales</taxon>
        <taxon>Rubrobacteraceae</taxon>
        <taxon>Rubrobacter</taxon>
    </lineage>
</organism>
<proteinExistence type="inferred from homology"/>
<reference key="1">
    <citation type="submission" date="2006-06" db="EMBL/GenBank/DDBJ databases">
        <title>Complete sequence of Rubrobacter xylanophilus DSM 9941.</title>
        <authorList>
            <consortium name="US DOE Joint Genome Institute"/>
            <person name="Copeland A."/>
            <person name="Lucas S."/>
            <person name="Lapidus A."/>
            <person name="Barry K."/>
            <person name="Detter J.C."/>
            <person name="Glavina del Rio T."/>
            <person name="Hammon N."/>
            <person name="Israni S."/>
            <person name="Dalin E."/>
            <person name="Tice H."/>
            <person name="Pitluck S."/>
            <person name="Munk A.C."/>
            <person name="Brettin T."/>
            <person name="Bruce D."/>
            <person name="Han C."/>
            <person name="Tapia R."/>
            <person name="Gilna P."/>
            <person name="Schmutz J."/>
            <person name="Larimer F."/>
            <person name="Land M."/>
            <person name="Hauser L."/>
            <person name="Kyrpides N."/>
            <person name="Lykidis A."/>
            <person name="da Costa M.S."/>
            <person name="Rainey F.A."/>
            <person name="Empadinhas N."/>
            <person name="Jolivet E."/>
            <person name="Battista J.R."/>
            <person name="Richardson P."/>
        </authorList>
    </citation>
    <scope>NUCLEOTIDE SEQUENCE [LARGE SCALE GENOMIC DNA]</scope>
    <source>
        <strain>DSM 9941 / JCM 11954 / NBRC 16129 / PRD-1</strain>
    </source>
</reference>